<evidence type="ECO:0000255" key="1">
    <source>
        <dbReference type="PROSITE-ProRule" id="PRU00989"/>
    </source>
</evidence>
<keyword id="KW-0004">4Fe-4S</keyword>
<keyword id="KW-0408">Iron</keyword>
<keyword id="KW-0411">Iron-sulfur</keyword>
<keyword id="KW-0479">Metal-binding</keyword>
<keyword id="KW-1185">Reference proteome</keyword>
<reference key="1">
    <citation type="journal article" date="1996" name="Science">
        <title>Complete genome sequence of the methanogenic archaeon, Methanococcus jannaschii.</title>
        <authorList>
            <person name="Bult C.J."/>
            <person name="White O."/>
            <person name="Olsen G.J."/>
            <person name="Zhou L."/>
            <person name="Fleischmann R.D."/>
            <person name="Sutton G.G."/>
            <person name="Blake J.A."/>
            <person name="FitzGerald L.M."/>
            <person name="Clayton R.A."/>
            <person name="Gocayne J.D."/>
            <person name="Kerlavage A.R."/>
            <person name="Dougherty B.A."/>
            <person name="Tomb J.-F."/>
            <person name="Adams M.D."/>
            <person name="Reich C.I."/>
            <person name="Overbeek R."/>
            <person name="Kirkness E.F."/>
            <person name="Weinstock K.G."/>
            <person name="Merrick J.M."/>
            <person name="Glodek A."/>
            <person name="Scott J.L."/>
            <person name="Geoghagen N.S.M."/>
            <person name="Weidman J.F."/>
            <person name="Fuhrmann J.L."/>
            <person name="Nguyen D."/>
            <person name="Utterback T.R."/>
            <person name="Kelley J.M."/>
            <person name="Peterson J.D."/>
            <person name="Sadow P.W."/>
            <person name="Hanna M.C."/>
            <person name="Cotton M.D."/>
            <person name="Roberts K.M."/>
            <person name="Hurst M.A."/>
            <person name="Kaine B.P."/>
            <person name="Borodovsky M."/>
            <person name="Klenk H.-P."/>
            <person name="Fraser C.M."/>
            <person name="Smith H.O."/>
            <person name="Woese C.R."/>
            <person name="Venter J.C."/>
        </authorList>
    </citation>
    <scope>NUCLEOTIDE SEQUENCE [LARGE SCALE GENOMIC DNA]</scope>
    <source>
        <strain>ATCC 43067 / DSM 2661 / JAL-1 / JCM 10045 / NBRC 100440</strain>
    </source>
</reference>
<accession>Q57583</accession>
<name>Y119_METJA</name>
<comment type="cofactor">
    <cofactor evidence="1">
        <name>[4Fe-4S] cluster</name>
        <dbReference type="ChEBI" id="CHEBI:49883"/>
    </cofactor>
    <text evidence="1">Binds 1 [4Fe-4S] cluster.</text>
</comment>
<dbReference type="EMBL" id="L77117">
    <property type="protein sequence ID" value="AAB98100.1"/>
    <property type="molecule type" value="Genomic_DNA"/>
</dbReference>
<dbReference type="PIR" id="G64314">
    <property type="entry name" value="G64314"/>
</dbReference>
<dbReference type="SMR" id="Q57583"/>
<dbReference type="STRING" id="243232.MJ_0119"/>
<dbReference type="PaxDb" id="243232-MJ_0119"/>
<dbReference type="EnsemblBacteria" id="AAB98100">
    <property type="protein sequence ID" value="AAB98100"/>
    <property type="gene ID" value="MJ_0119"/>
</dbReference>
<dbReference type="KEGG" id="mja:MJ_0119"/>
<dbReference type="eggNOG" id="arCOG00295">
    <property type="taxonomic scope" value="Archaea"/>
</dbReference>
<dbReference type="HOGENOM" id="CLU_087825_0_0_2"/>
<dbReference type="InParanoid" id="Q57583"/>
<dbReference type="PhylomeDB" id="Q57583"/>
<dbReference type="Proteomes" id="UP000000805">
    <property type="component" value="Chromosome"/>
</dbReference>
<dbReference type="GO" id="GO:0051539">
    <property type="term" value="F:4 iron, 4 sulfur cluster binding"/>
    <property type="evidence" value="ECO:0007669"/>
    <property type="project" value="UniProtKB-KW"/>
</dbReference>
<dbReference type="GO" id="GO:0046872">
    <property type="term" value="F:metal ion binding"/>
    <property type="evidence" value="ECO:0007669"/>
    <property type="project" value="UniProtKB-KW"/>
</dbReference>
<dbReference type="Gene3D" id="3.20.20.20">
    <property type="entry name" value="Dihydropteroate synthase-like"/>
    <property type="match status" value="1"/>
</dbReference>
<dbReference type="InterPro" id="IPR007202">
    <property type="entry name" value="4Fe-4S_dom"/>
</dbReference>
<dbReference type="InterPro" id="IPR051069">
    <property type="entry name" value="ACDS_complex_subunit"/>
</dbReference>
<dbReference type="InterPro" id="IPR011005">
    <property type="entry name" value="Dihydropteroate_synth-like_sf"/>
</dbReference>
<dbReference type="PANTHER" id="PTHR36214">
    <property type="match status" value="1"/>
</dbReference>
<dbReference type="PANTHER" id="PTHR36214:SF3">
    <property type="entry name" value="ACETYL-COA DECARBONYLASE_SYNTHASE COMPLEX SUBUNIT GAMMA"/>
    <property type="match status" value="1"/>
</dbReference>
<dbReference type="Pfam" id="PF04060">
    <property type="entry name" value="FeS"/>
    <property type="match status" value="1"/>
</dbReference>
<dbReference type="PROSITE" id="PS51656">
    <property type="entry name" value="4FE4S"/>
    <property type="match status" value="1"/>
</dbReference>
<sequence>MDSWNMKGSKMVDVNEITKYLPGFNCGACGYKRCDLFAEALLNKDVKLEDCPFLLRERFKENYEKLKEILKIKGKIKKEEKYIGVIDGYEADFLLKPLPNECSCRETLLIMDKKELKVGDYIRYRPLGCPIPHFAKIIDEYHGFYIIHVVGPSHRITGEKIEYKDVGIAIVVAFEGIVEGKVPEVGKTVKFIPKHCMMQKVHSGVVVQVEGKRVYIEGIDLKVF</sequence>
<feature type="chain" id="PRO_0000106701" description="Uncharacterized protein MJ0119">
    <location>
        <begin position="1"/>
        <end position="224"/>
    </location>
</feature>
<feature type="domain" description="4Fe-4S" evidence="1">
    <location>
        <begin position="9"/>
        <end position="68"/>
    </location>
</feature>
<feature type="binding site" evidence="1">
    <location>
        <position position="26"/>
    </location>
    <ligand>
        <name>[4Fe-4S] cluster</name>
        <dbReference type="ChEBI" id="CHEBI:49883"/>
    </ligand>
</feature>
<feature type="binding site" evidence="1">
    <location>
        <position position="29"/>
    </location>
    <ligand>
        <name>[4Fe-4S] cluster</name>
        <dbReference type="ChEBI" id="CHEBI:49883"/>
    </ligand>
</feature>
<feature type="binding site" evidence="1">
    <location>
        <position position="34"/>
    </location>
    <ligand>
        <name>[4Fe-4S] cluster</name>
        <dbReference type="ChEBI" id="CHEBI:49883"/>
    </ligand>
</feature>
<feature type="binding site" evidence="1">
    <location>
        <position position="51"/>
    </location>
    <ligand>
        <name>[4Fe-4S] cluster</name>
        <dbReference type="ChEBI" id="CHEBI:49883"/>
    </ligand>
</feature>
<protein>
    <recommendedName>
        <fullName>Uncharacterized protein MJ0119</fullName>
    </recommendedName>
</protein>
<gene>
    <name type="ordered locus">MJ0119</name>
</gene>
<proteinExistence type="inferred from homology"/>
<organism>
    <name type="scientific">Methanocaldococcus jannaschii (strain ATCC 43067 / DSM 2661 / JAL-1 / JCM 10045 / NBRC 100440)</name>
    <name type="common">Methanococcus jannaschii</name>
    <dbReference type="NCBI Taxonomy" id="243232"/>
    <lineage>
        <taxon>Archaea</taxon>
        <taxon>Methanobacteriati</taxon>
        <taxon>Methanobacteriota</taxon>
        <taxon>Methanomada group</taxon>
        <taxon>Methanococci</taxon>
        <taxon>Methanococcales</taxon>
        <taxon>Methanocaldococcaceae</taxon>
        <taxon>Methanocaldococcus</taxon>
    </lineage>
</organism>